<dbReference type="EC" id="2.5.1.-" evidence="1"/>
<dbReference type="EMBL" id="AL939118">
    <property type="protein sequence ID" value="CAB45225.1"/>
    <property type="molecule type" value="Genomic_DNA"/>
</dbReference>
<dbReference type="PIR" id="T36727">
    <property type="entry name" value="T36727"/>
</dbReference>
<dbReference type="RefSeq" id="NP_628046.1">
    <property type="nucleotide sequence ID" value="NC_003888.3"/>
</dbReference>
<dbReference type="RefSeq" id="WP_011029274.1">
    <property type="nucleotide sequence ID" value="NZ_VNID01000003.1"/>
</dbReference>
<dbReference type="SMR" id="Q9XA06"/>
<dbReference type="FunCoup" id="Q9XA06">
    <property type="interactions" value="87"/>
</dbReference>
<dbReference type="STRING" id="100226.gene:17761483"/>
<dbReference type="PaxDb" id="100226-SCO3858"/>
<dbReference type="KEGG" id="sco:SCO3858"/>
<dbReference type="PATRIC" id="fig|100226.15.peg.3929"/>
<dbReference type="eggNOG" id="COG0020">
    <property type="taxonomic scope" value="Bacteria"/>
</dbReference>
<dbReference type="HOGENOM" id="CLU_038505_2_0_11"/>
<dbReference type="InParanoid" id="Q9XA06"/>
<dbReference type="OrthoDB" id="4191603at2"/>
<dbReference type="PhylomeDB" id="Q9XA06"/>
<dbReference type="Proteomes" id="UP000001973">
    <property type="component" value="Chromosome"/>
</dbReference>
<dbReference type="GO" id="GO:0005886">
    <property type="term" value="C:plasma membrane"/>
    <property type="evidence" value="ECO:0000318"/>
    <property type="project" value="GO_Central"/>
</dbReference>
<dbReference type="GO" id="GO:0000287">
    <property type="term" value="F:magnesium ion binding"/>
    <property type="evidence" value="ECO:0007669"/>
    <property type="project" value="UniProtKB-UniRule"/>
</dbReference>
<dbReference type="GO" id="GO:0004659">
    <property type="term" value="F:prenyltransferase activity"/>
    <property type="evidence" value="ECO:0007669"/>
    <property type="project" value="UniProtKB-UniRule"/>
</dbReference>
<dbReference type="GO" id="GO:0033850">
    <property type="term" value="F:Z-farnesyl diphosphate synthase activity"/>
    <property type="evidence" value="ECO:0000318"/>
    <property type="project" value="GO_Central"/>
</dbReference>
<dbReference type="GO" id="GO:0016094">
    <property type="term" value="P:polyprenol biosynthetic process"/>
    <property type="evidence" value="ECO:0000318"/>
    <property type="project" value="GO_Central"/>
</dbReference>
<dbReference type="CDD" id="cd00475">
    <property type="entry name" value="Cis_IPPS"/>
    <property type="match status" value="1"/>
</dbReference>
<dbReference type="FunFam" id="3.40.1180.10:FF:000003">
    <property type="entry name" value="Isoprenyl transferase 2"/>
    <property type="match status" value="1"/>
</dbReference>
<dbReference type="Gene3D" id="3.40.1180.10">
    <property type="entry name" value="Decaprenyl diphosphate synthase-like"/>
    <property type="match status" value="1"/>
</dbReference>
<dbReference type="HAMAP" id="MF_01139">
    <property type="entry name" value="ISPT"/>
    <property type="match status" value="1"/>
</dbReference>
<dbReference type="InterPro" id="IPR001441">
    <property type="entry name" value="UPP_synth-like"/>
</dbReference>
<dbReference type="InterPro" id="IPR018520">
    <property type="entry name" value="UPP_synth-like_CS"/>
</dbReference>
<dbReference type="InterPro" id="IPR036424">
    <property type="entry name" value="UPP_synth-like_sf"/>
</dbReference>
<dbReference type="NCBIfam" id="NF011403">
    <property type="entry name" value="PRK14828.1"/>
    <property type="match status" value="1"/>
</dbReference>
<dbReference type="NCBIfam" id="TIGR00055">
    <property type="entry name" value="uppS"/>
    <property type="match status" value="1"/>
</dbReference>
<dbReference type="PANTHER" id="PTHR10291:SF43">
    <property type="entry name" value="DEHYDRODOLICHYL DIPHOSPHATE SYNTHASE COMPLEX SUBUNIT DHDDS"/>
    <property type="match status" value="1"/>
</dbReference>
<dbReference type="PANTHER" id="PTHR10291">
    <property type="entry name" value="DEHYDRODOLICHYL DIPHOSPHATE SYNTHASE FAMILY MEMBER"/>
    <property type="match status" value="1"/>
</dbReference>
<dbReference type="Pfam" id="PF01255">
    <property type="entry name" value="Prenyltransf"/>
    <property type="match status" value="1"/>
</dbReference>
<dbReference type="SUPFAM" id="SSF64005">
    <property type="entry name" value="Undecaprenyl diphosphate synthase"/>
    <property type="match status" value="1"/>
</dbReference>
<dbReference type="PROSITE" id="PS01066">
    <property type="entry name" value="UPP_SYNTHASE"/>
    <property type="match status" value="1"/>
</dbReference>
<organism>
    <name type="scientific">Streptomyces coelicolor (strain ATCC BAA-471 / A3(2) / M145)</name>
    <dbReference type="NCBI Taxonomy" id="100226"/>
    <lineage>
        <taxon>Bacteria</taxon>
        <taxon>Bacillati</taxon>
        <taxon>Actinomycetota</taxon>
        <taxon>Actinomycetes</taxon>
        <taxon>Kitasatosporales</taxon>
        <taxon>Streptomycetaceae</taxon>
        <taxon>Streptomyces</taxon>
        <taxon>Streptomyces albidoflavus group</taxon>
    </lineage>
</organism>
<name>ISPT2_STRCO</name>
<protein>
    <recommendedName>
        <fullName evidence="1">Isoprenyl transferase 2</fullName>
        <ecNumber evidence="1">2.5.1.-</ecNumber>
    </recommendedName>
</protein>
<proteinExistence type="inferred from homology"/>
<feature type="chain" id="PRO_0000123686" description="Isoprenyl transferase 2">
    <location>
        <begin position="1"/>
        <end position="258"/>
    </location>
</feature>
<feature type="active site" evidence="1">
    <location>
        <position position="35"/>
    </location>
</feature>
<feature type="active site" description="Proton acceptor" evidence="1">
    <location>
        <position position="84"/>
    </location>
</feature>
<feature type="binding site" evidence="1">
    <location>
        <position position="35"/>
    </location>
    <ligand>
        <name>Mg(2+)</name>
        <dbReference type="ChEBI" id="CHEBI:18420"/>
    </ligand>
</feature>
<feature type="binding site" evidence="1">
    <location>
        <begin position="36"/>
        <end position="39"/>
    </location>
    <ligand>
        <name>substrate</name>
    </ligand>
</feature>
<feature type="binding site" evidence="1">
    <location>
        <position position="40"/>
    </location>
    <ligand>
        <name>substrate</name>
    </ligand>
</feature>
<feature type="binding site" evidence="1">
    <location>
        <position position="50"/>
    </location>
    <ligand>
        <name>substrate</name>
    </ligand>
</feature>
<feature type="binding site" evidence="1">
    <location>
        <begin position="81"/>
        <end position="83"/>
    </location>
    <ligand>
        <name>substrate</name>
    </ligand>
</feature>
<feature type="binding site" evidence="1">
    <location>
        <position position="87"/>
    </location>
    <ligand>
        <name>substrate</name>
    </ligand>
</feature>
<feature type="binding site" evidence="1">
    <location>
        <position position="207"/>
    </location>
    <ligand>
        <name>substrate</name>
    </ligand>
</feature>
<feature type="binding site" evidence="1">
    <location>
        <begin position="213"/>
        <end position="215"/>
    </location>
    <ligand>
        <name>substrate</name>
    </ligand>
</feature>
<feature type="binding site" evidence="1">
    <location>
        <position position="226"/>
    </location>
    <ligand>
        <name>Mg(2+)</name>
        <dbReference type="ChEBI" id="CHEBI:18420"/>
    </ligand>
</feature>
<accession>Q9XA06</accession>
<gene>
    <name evidence="1" type="primary">uppS2</name>
    <name type="ordered locus">SCO3858</name>
    <name type="ORF">SCH69.28c</name>
</gene>
<keyword id="KW-0460">Magnesium</keyword>
<keyword id="KW-0479">Metal-binding</keyword>
<keyword id="KW-1185">Reference proteome</keyword>
<keyword id="KW-0808">Transferase</keyword>
<sequence>MRAKVRAALDALYMKRLVRELEGRPRPQHIGIMLDGNRRWAKMSGIDDPREGYRAGGAKVLDFLRWCDSAQIEHVTLFMLSDDNLARPEEQLNPLIDIIAEVVEQLAAPGNPWPVEAVGALDLLPAESASRLKTATAATQGRKGGTKVDVAVGYGGRREIVDAVRSALTEHSSQGGDIDEFIETFTMEHISKHLYSKTRSESDLIIRTSGEQRLSGFLLWQSAYAEVHFCETYWPDFREIDFLRALRSYSLRERRYGR</sequence>
<evidence type="ECO:0000255" key="1">
    <source>
        <dbReference type="HAMAP-Rule" id="MF_01139"/>
    </source>
</evidence>
<comment type="function">
    <text evidence="1">Catalyzes the condensation of isopentenyl diphosphate (IPP) with allylic pyrophosphates generating different type of terpenoids.</text>
</comment>
<comment type="cofactor">
    <cofactor evidence="1">
        <name>Mg(2+)</name>
        <dbReference type="ChEBI" id="CHEBI:18420"/>
    </cofactor>
    <text evidence="1">Binds 2 magnesium ions per subunit.</text>
</comment>
<comment type="subunit">
    <text evidence="1">Homodimer.</text>
</comment>
<comment type="similarity">
    <text evidence="1">Belongs to the UPP synthase family.</text>
</comment>
<reference key="1">
    <citation type="journal article" date="2002" name="Nature">
        <title>Complete genome sequence of the model actinomycete Streptomyces coelicolor A3(2).</title>
        <authorList>
            <person name="Bentley S.D."/>
            <person name="Chater K.F."/>
            <person name="Cerdeno-Tarraga A.-M."/>
            <person name="Challis G.L."/>
            <person name="Thomson N.R."/>
            <person name="James K.D."/>
            <person name="Harris D.E."/>
            <person name="Quail M.A."/>
            <person name="Kieser H."/>
            <person name="Harper D."/>
            <person name="Bateman A."/>
            <person name="Brown S."/>
            <person name="Chandra G."/>
            <person name="Chen C.W."/>
            <person name="Collins M."/>
            <person name="Cronin A."/>
            <person name="Fraser A."/>
            <person name="Goble A."/>
            <person name="Hidalgo J."/>
            <person name="Hornsby T."/>
            <person name="Howarth S."/>
            <person name="Huang C.-H."/>
            <person name="Kieser T."/>
            <person name="Larke L."/>
            <person name="Murphy L.D."/>
            <person name="Oliver K."/>
            <person name="O'Neil S."/>
            <person name="Rabbinowitsch E."/>
            <person name="Rajandream M.A."/>
            <person name="Rutherford K.M."/>
            <person name="Rutter S."/>
            <person name="Seeger K."/>
            <person name="Saunders D."/>
            <person name="Sharp S."/>
            <person name="Squares R."/>
            <person name="Squares S."/>
            <person name="Taylor K."/>
            <person name="Warren T."/>
            <person name="Wietzorrek A."/>
            <person name="Woodward J.R."/>
            <person name="Barrell B.G."/>
            <person name="Parkhill J."/>
            <person name="Hopwood D.A."/>
        </authorList>
    </citation>
    <scope>NUCLEOTIDE SEQUENCE [LARGE SCALE GENOMIC DNA]</scope>
    <source>
        <strain>ATCC BAA-471 / A3(2) / M145</strain>
    </source>
</reference>